<keyword id="KW-0067">ATP-binding</keyword>
<keyword id="KW-0408">Iron</keyword>
<keyword id="KW-0411">Iron-sulfur</keyword>
<keyword id="KW-0479">Metal-binding</keyword>
<keyword id="KW-0535">Nitrogen fixation</keyword>
<keyword id="KW-0547">Nucleotide-binding</keyword>
<keyword id="KW-0560">Oxidoreductase</keyword>
<gene>
    <name type="primary">vnfK</name>
</gene>
<reference key="1">
    <citation type="journal article" date="1999" name="Can. J. Microbiol.">
        <title>Identification of genes unique to Mo-independent nitrogenase systems in diverse diazotrophs.</title>
        <authorList>
            <person name="Loveless T.M."/>
            <person name="Bishop P.E."/>
        </authorList>
    </citation>
    <scope>NUCLEOTIDE SEQUENCE [GENOMIC DNA]</scope>
</reference>
<protein>
    <recommendedName>
        <fullName>Nitrogenase vanadium-iron protein beta chain</fullName>
        <ecNumber>1.18.6.1</ecNumber>
    </recommendedName>
    <alternativeName>
        <fullName>Dinitrogenase 2 subunit beta</fullName>
    </alternativeName>
    <alternativeName>
        <fullName>Nitrogenase component I</fullName>
    </alternativeName>
</protein>
<name>VNFK_AZOPA</name>
<sequence>MSNCELTVLKPAEVKLSPRDREGIINPMYDCQPAGAQYAGIGIKDCIPLVHGGQGCTMFVRLLFAQHFKENFDVASTSLHEESAVFGGAKRVEEGVLVLARRYPNLRVIPIITTCSTEVIGDDIEGSIRVCNRALEAEFPDRKIYLAPVHTPSFKGSHVTGYAECVKSVFKTITDAHGKGQPSGKLNVFPGWVNPGDVVLLKHYFKEMDVEANIYMDTEDFDSPMLPNKSIETHGRTTVEDIADSANALATLSLARYEGNTTGELLQKTFAVPNALVNTPYGIKNTDDMLRKIAEVTGKEIPESLVRERGIALDALADLAHMFFANKKVAIFGHPDLVLGLAQFCIEV</sequence>
<accession>O68949</accession>
<proteinExistence type="inferred from homology"/>
<evidence type="ECO:0000250" key="1"/>
<evidence type="ECO:0000305" key="2"/>
<comment type="function">
    <text>This vanadium-iron protein is part of the nitrogenase complex that catalyzes the key enzymatic reactions in nitrogen fixation.</text>
</comment>
<comment type="catalytic activity">
    <reaction>
        <text>N2 + 8 reduced [2Fe-2S]-[ferredoxin] + 16 ATP + 16 H2O = H2 + 8 oxidized [2Fe-2S]-[ferredoxin] + 2 NH4(+) + 16 ADP + 16 phosphate + 6 H(+)</text>
        <dbReference type="Rhea" id="RHEA:21448"/>
        <dbReference type="Rhea" id="RHEA-COMP:10000"/>
        <dbReference type="Rhea" id="RHEA-COMP:10001"/>
        <dbReference type="ChEBI" id="CHEBI:15377"/>
        <dbReference type="ChEBI" id="CHEBI:15378"/>
        <dbReference type="ChEBI" id="CHEBI:17997"/>
        <dbReference type="ChEBI" id="CHEBI:18276"/>
        <dbReference type="ChEBI" id="CHEBI:28938"/>
        <dbReference type="ChEBI" id="CHEBI:30616"/>
        <dbReference type="ChEBI" id="CHEBI:33737"/>
        <dbReference type="ChEBI" id="CHEBI:33738"/>
        <dbReference type="ChEBI" id="CHEBI:43474"/>
        <dbReference type="ChEBI" id="CHEBI:456216"/>
        <dbReference type="EC" id="1.18.6.1"/>
    </reaction>
</comment>
<comment type="cofactor">
    <cofactor evidence="1">
        <name>[8Fe-7S] cluster</name>
        <dbReference type="ChEBI" id="CHEBI:21143"/>
    </cofactor>
    <text evidence="1">Binds 1 [8Fe-7S] cluster per heterodimer.</text>
</comment>
<comment type="subunit">
    <text evidence="1">Hexamer of two alpha, two beta, and two delta chains.</text>
</comment>
<comment type="similarity">
    <text evidence="2">Belongs to the NifD/NifK/NifE/NifN family.</text>
</comment>
<dbReference type="EC" id="1.18.6.1"/>
<dbReference type="EMBL" id="AF058781">
    <property type="protein sequence ID" value="AAC14336.1"/>
    <property type="molecule type" value="Genomic_DNA"/>
</dbReference>
<dbReference type="SMR" id="O68949"/>
<dbReference type="GO" id="GO:0005524">
    <property type="term" value="F:ATP binding"/>
    <property type="evidence" value="ECO:0007669"/>
    <property type="project" value="UniProtKB-KW"/>
</dbReference>
<dbReference type="GO" id="GO:0051536">
    <property type="term" value="F:iron-sulfur cluster binding"/>
    <property type="evidence" value="ECO:0007669"/>
    <property type="project" value="UniProtKB-KW"/>
</dbReference>
<dbReference type="GO" id="GO:0046872">
    <property type="term" value="F:metal ion binding"/>
    <property type="evidence" value="ECO:0007669"/>
    <property type="project" value="UniProtKB-KW"/>
</dbReference>
<dbReference type="GO" id="GO:0016163">
    <property type="term" value="F:nitrogenase activity"/>
    <property type="evidence" value="ECO:0007669"/>
    <property type="project" value="UniProtKB-EC"/>
</dbReference>
<dbReference type="GO" id="GO:0009399">
    <property type="term" value="P:nitrogen fixation"/>
    <property type="evidence" value="ECO:0007669"/>
    <property type="project" value="UniProtKB-KW"/>
</dbReference>
<dbReference type="Gene3D" id="3.40.50.1980">
    <property type="entry name" value="Nitrogenase molybdenum iron protein domain"/>
    <property type="match status" value="2"/>
</dbReference>
<dbReference type="Gene3D" id="1.20.89.10">
    <property type="entry name" value="Nitrogenase Molybdenum-iron Protein, subunit B, domain 4"/>
    <property type="match status" value="1"/>
</dbReference>
<dbReference type="InterPro" id="IPR050152">
    <property type="entry name" value="ChlB/BchB/BchZ"/>
</dbReference>
<dbReference type="InterPro" id="IPR000510">
    <property type="entry name" value="Nase/OxRdtase_comp1"/>
</dbReference>
<dbReference type="InterPro" id="IPR000318">
    <property type="entry name" value="Nase_comp1_CS"/>
</dbReference>
<dbReference type="PANTHER" id="PTHR33712">
    <property type="entry name" value="LIGHT-INDEPENDENT PROTOCHLOROPHYLLIDE REDUCTASE SUBUNIT B"/>
    <property type="match status" value="1"/>
</dbReference>
<dbReference type="PANTHER" id="PTHR33712:SF7">
    <property type="entry name" value="LIGHT-INDEPENDENT PROTOCHLOROPHYLLIDE REDUCTASE SUBUNIT B"/>
    <property type="match status" value="1"/>
</dbReference>
<dbReference type="Pfam" id="PF00148">
    <property type="entry name" value="Oxidored_nitro"/>
    <property type="match status" value="1"/>
</dbReference>
<dbReference type="SUPFAM" id="SSF53807">
    <property type="entry name" value="Helical backbone' metal receptor"/>
    <property type="match status" value="1"/>
</dbReference>
<dbReference type="PROSITE" id="PS00699">
    <property type="entry name" value="NITROGENASE_1_1"/>
    <property type="match status" value="1"/>
</dbReference>
<dbReference type="PROSITE" id="PS00090">
    <property type="entry name" value="NITROGENASE_1_2"/>
    <property type="match status" value="1"/>
</dbReference>
<feature type="chain" id="PRO_0000153089" description="Nitrogenase vanadium-iron protein beta chain">
    <location>
        <begin position="1"/>
        <end position="348" status="greater than"/>
    </location>
</feature>
<feature type="binding site" evidence="1">
    <location>
        <position position="31"/>
    </location>
    <ligand>
        <name>[8Fe-7S] cluster</name>
        <dbReference type="ChEBI" id="CHEBI:21143"/>
        <note>ligand shared with alpha chain</note>
    </ligand>
</feature>
<feature type="binding site" evidence="1">
    <location>
        <position position="56"/>
    </location>
    <ligand>
        <name>[8Fe-7S] cluster</name>
        <dbReference type="ChEBI" id="CHEBI:21143"/>
        <note>ligand shared with alpha chain</note>
    </ligand>
</feature>
<feature type="binding site" evidence="1">
    <location>
        <position position="115"/>
    </location>
    <ligand>
        <name>[8Fe-7S] cluster</name>
        <dbReference type="ChEBI" id="CHEBI:21143"/>
        <note>ligand shared with alpha chain</note>
    </ligand>
</feature>
<feature type="binding site" evidence="1">
    <location>
        <position position="153"/>
    </location>
    <ligand>
        <name>[8Fe-7S] cluster</name>
        <dbReference type="ChEBI" id="CHEBI:21143"/>
        <note>ligand shared with alpha chain</note>
    </ligand>
</feature>
<feature type="non-terminal residue">
    <location>
        <position position="348"/>
    </location>
</feature>
<organism>
    <name type="scientific">Azorhizophilus paspali</name>
    <name type="common">Azotobacter paspali</name>
    <dbReference type="NCBI Taxonomy" id="69963"/>
    <lineage>
        <taxon>Bacteria</taxon>
        <taxon>Pseudomonadati</taxon>
        <taxon>Pseudomonadota</taxon>
        <taxon>Gammaproteobacteria</taxon>
        <taxon>Pseudomonadales</taxon>
        <taxon>Pseudomonadaceae</taxon>
        <taxon>Azorhizophilus</taxon>
    </lineage>
</organism>